<reference key="1">
    <citation type="journal article" date="1989" name="J. Gen. Microbiol.">
        <title>Sequence of pilin from Bacteroides nodosus 351 (Serogroup H) and implications for serogroup classification.</title>
        <authorList>
            <person name="Hoyne P.A."/>
            <person name="Elleman T.C."/>
            <person name="McKern N.M."/>
            <person name="Stewart D.J."/>
        </authorList>
    </citation>
    <scope>NUCLEOTIDE SEQUENCE [GENOMIC DNA]</scope>
    <source>
        <strain>Serogroup H isolate 351</strain>
    </source>
</reference>
<protein>
    <recommendedName>
        <fullName>Type IV major fimbrial protein FimA</fullName>
    </recommendedName>
    <alternativeName>
        <fullName>351 antigen</fullName>
    </alternativeName>
    <alternativeName>
        <fullName>Pilin</fullName>
    </alternativeName>
    <alternativeName>
        <fullName>Serogroup H</fullName>
    </alternativeName>
</protein>
<organism>
    <name type="scientific">Dichelobacter nodosus</name>
    <name type="common">Bacteroides nodosus</name>
    <dbReference type="NCBI Taxonomy" id="870"/>
    <lineage>
        <taxon>Bacteria</taxon>
        <taxon>Pseudomonadati</taxon>
        <taxon>Pseudomonadota</taxon>
        <taxon>Gammaproteobacteria</taxon>
        <taxon>Cardiobacteriales</taxon>
        <taxon>Cardiobacteriaceae</taxon>
        <taxon>Dichelobacter</taxon>
    </lineage>
</organism>
<proteinExistence type="inferred from homology"/>
<name>FMAJ_DICNO</name>
<accession>P19528</accession>
<feature type="propeptide" id="PRO_0000024140" description="Leader sequence" evidence="3">
    <location>
        <begin position="1"/>
        <end position="7"/>
    </location>
</feature>
<feature type="chain" id="PRO_0000024141" description="Type IV major fimbrial protein FimA">
    <location>
        <begin position="8"/>
        <end position="160"/>
    </location>
</feature>
<feature type="transmembrane region" description="Helical" evidence="2">
    <location>
        <begin position="8"/>
        <end position="28"/>
    </location>
</feature>
<feature type="modified residue" description="N-methylphenylalanine" evidence="3">
    <location>
        <position position="8"/>
    </location>
</feature>
<sequence length="160" mass="17170">MKSLQKGFTLIELMIVVAIIGILAAIAIPQYQNYIARSQVSRVMSETGQMRTAIETCLLDGKKADECFIGWTKSNLLGASGSPSSSNDSTADHPGQGGLVIDYKLEADATNAITATFGQNAAATLHGKALKWTRDPKATWSCSTDVELKFRPTGCKDDLK</sequence>
<dbReference type="EMBL" id="M26980">
    <property type="protein sequence ID" value="AAA23336.1"/>
    <property type="molecule type" value="Genomic_DNA"/>
</dbReference>
<dbReference type="PIR" id="A37167">
    <property type="entry name" value="A37167"/>
</dbReference>
<dbReference type="SMR" id="P19528"/>
<dbReference type="GO" id="GO:0016020">
    <property type="term" value="C:membrane"/>
    <property type="evidence" value="ECO:0007669"/>
    <property type="project" value="UniProtKB-SubCell"/>
</dbReference>
<dbReference type="GO" id="GO:0009289">
    <property type="term" value="C:pilus"/>
    <property type="evidence" value="ECO:0007669"/>
    <property type="project" value="UniProtKB-SubCell"/>
</dbReference>
<dbReference type="GO" id="GO:0015627">
    <property type="term" value="C:type II protein secretion system complex"/>
    <property type="evidence" value="ECO:0007669"/>
    <property type="project" value="InterPro"/>
</dbReference>
<dbReference type="GO" id="GO:0007155">
    <property type="term" value="P:cell adhesion"/>
    <property type="evidence" value="ECO:0007669"/>
    <property type="project" value="InterPro"/>
</dbReference>
<dbReference type="GO" id="GO:0015628">
    <property type="term" value="P:protein secretion by the type II secretion system"/>
    <property type="evidence" value="ECO:0007669"/>
    <property type="project" value="InterPro"/>
</dbReference>
<dbReference type="Gene3D" id="3.30.700.10">
    <property type="entry name" value="Glycoprotein, Type 4 Pilin"/>
    <property type="match status" value="1"/>
</dbReference>
<dbReference type="InterPro" id="IPR000983">
    <property type="entry name" value="Bac_GSPG_pilin"/>
</dbReference>
<dbReference type="InterPro" id="IPR012902">
    <property type="entry name" value="N_methyl_site"/>
</dbReference>
<dbReference type="InterPro" id="IPR001082">
    <property type="entry name" value="Pilin"/>
</dbReference>
<dbReference type="InterPro" id="IPR045584">
    <property type="entry name" value="Pilin-like"/>
</dbReference>
<dbReference type="InterPro" id="IPR050470">
    <property type="entry name" value="T4P/T2SS_Core"/>
</dbReference>
<dbReference type="NCBIfam" id="TIGR02532">
    <property type="entry name" value="IV_pilin_GFxxxE"/>
    <property type="match status" value="1"/>
</dbReference>
<dbReference type="PANTHER" id="PTHR30093">
    <property type="entry name" value="GENERAL SECRETION PATHWAY PROTEIN G"/>
    <property type="match status" value="1"/>
</dbReference>
<dbReference type="PANTHER" id="PTHR30093:SF34">
    <property type="entry name" value="PREPILIN PEPTIDASE-DEPENDENT PROTEIN D"/>
    <property type="match status" value="1"/>
</dbReference>
<dbReference type="Pfam" id="PF07963">
    <property type="entry name" value="N_methyl"/>
    <property type="match status" value="1"/>
</dbReference>
<dbReference type="Pfam" id="PF00114">
    <property type="entry name" value="Pilin"/>
    <property type="match status" value="1"/>
</dbReference>
<dbReference type="PRINTS" id="PR00813">
    <property type="entry name" value="BCTERIALGSPG"/>
</dbReference>
<dbReference type="SUPFAM" id="SSF54523">
    <property type="entry name" value="Pili subunits"/>
    <property type="match status" value="1"/>
</dbReference>
<dbReference type="PROSITE" id="PS00409">
    <property type="entry name" value="PROKAR_NTER_METHYL"/>
    <property type="match status" value="1"/>
</dbReference>
<keyword id="KW-0281">Fimbrium</keyword>
<keyword id="KW-0472">Membrane</keyword>
<keyword id="KW-0488">Methylation</keyword>
<keyword id="KW-0812">Transmembrane</keyword>
<keyword id="KW-1133">Transmembrane helix</keyword>
<evidence type="ECO:0000250" key="1">
    <source>
        <dbReference type="UniProtKB" id="A5EWR9"/>
    </source>
</evidence>
<evidence type="ECO:0000255" key="2"/>
<evidence type="ECO:0000255" key="3">
    <source>
        <dbReference type="PROSITE-ProRule" id="PRU01070"/>
    </source>
</evidence>
<evidence type="ECO:0000305" key="4"/>
<comment type="function">
    <text evidence="1">Major component of the type IV fimbriae that plays an essential role in twitching motility, natural transformation, and protease secretion.</text>
</comment>
<comment type="subunit">
    <text>The pili are polar flexible filaments of about 5.4 nanometers diameter and 2.5 micrometers average length; they consist of only a single polypeptide chain arranged in a helical configuration of five subunits per turn in the assembled pilus.</text>
</comment>
<comment type="subcellular location">
    <subcellularLocation>
        <location evidence="1">Fimbrium</location>
    </subcellularLocation>
    <subcellularLocation>
        <location evidence="2">Membrane</location>
        <topology evidence="2">Single-pass membrane protein</topology>
    </subcellularLocation>
</comment>
<comment type="similarity">
    <text evidence="4">Belongs to the N-Me-Phe pilin family.</text>
</comment>
<gene>
    <name type="primary">fimA</name>
</gene>